<keyword id="KW-0560">Oxidoreductase</keyword>
<keyword id="KW-0884">PQQ biosynthesis</keyword>
<keyword id="KW-1185">Reference proteome</keyword>
<organism>
    <name type="scientific">Pseudomonas syringae pv. tomato (strain ATCC BAA-871 / DC3000)</name>
    <dbReference type="NCBI Taxonomy" id="223283"/>
    <lineage>
        <taxon>Bacteria</taxon>
        <taxon>Pseudomonadati</taxon>
        <taxon>Pseudomonadota</taxon>
        <taxon>Gammaproteobacteria</taxon>
        <taxon>Pseudomonadales</taxon>
        <taxon>Pseudomonadaceae</taxon>
        <taxon>Pseudomonas</taxon>
    </lineage>
</organism>
<gene>
    <name evidence="1" type="primary">pqqC</name>
    <name type="ordered locus">PSPTO_0511</name>
</gene>
<proteinExistence type="inferred from homology"/>
<feature type="chain" id="PRO_0000219985" description="Pyrroloquinoline-quinone synthase">
    <location>
        <begin position="1"/>
        <end position="251"/>
    </location>
</feature>
<comment type="function">
    <text evidence="1">Ring cyclization and eight-electron oxidation of 3a-(2-amino-2-carboxyethyl)-4,5-dioxo-4,5,6,7,8,9-hexahydroquinoline-7,9-dicarboxylic-acid to PQQ.</text>
</comment>
<comment type="catalytic activity">
    <reaction evidence="1">
        <text>6-(2-amino-2-carboxyethyl)-7,8-dioxo-1,2,3,4,7,8-hexahydroquinoline-2,4-dicarboxylate + 3 O2 = pyrroloquinoline quinone + 2 H2O2 + 2 H2O + H(+)</text>
        <dbReference type="Rhea" id="RHEA:10692"/>
        <dbReference type="ChEBI" id="CHEBI:15377"/>
        <dbReference type="ChEBI" id="CHEBI:15378"/>
        <dbReference type="ChEBI" id="CHEBI:15379"/>
        <dbReference type="ChEBI" id="CHEBI:16240"/>
        <dbReference type="ChEBI" id="CHEBI:58442"/>
        <dbReference type="ChEBI" id="CHEBI:58778"/>
        <dbReference type="EC" id="1.3.3.11"/>
    </reaction>
</comment>
<comment type="pathway">
    <text evidence="1">Cofactor biosynthesis; pyrroloquinoline quinone biosynthesis.</text>
</comment>
<comment type="similarity">
    <text evidence="1">Belongs to the PqqC family.</text>
</comment>
<evidence type="ECO:0000255" key="1">
    <source>
        <dbReference type="HAMAP-Rule" id="MF_00654"/>
    </source>
</evidence>
<reference key="1">
    <citation type="journal article" date="2003" name="Proc. Natl. Acad. Sci. U.S.A.">
        <title>The complete genome sequence of the Arabidopsis and tomato pathogen Pseudomonas syringae pv. tomato DC3000.</title>
        <authorList>
            <person name="Buell C.R."/>
            <person name="Joardar V."/>
            <person name="Lindeberg M."/>
            <person name="Selengut J."/>
            <person name="Paulsen I.T."/>
            <person name="Gwinn M.L."/>
            <person name="Dodson R.J."/>
            <person name="DeBoy R.T."/>
            <person name="Durkin A.S."/>
            <person name="Kolonay J.F."/>
            <person name="Madupu R."/>
            <person name="Daugherty S.C."/>
            <person name="Brinkac L.M."/>
            <person name="Beanan M.J."/>
            <person name="Haft D.H."/>
            <person name="Nelson W.C."/>
            <person name="Davidsen T.M."/>
            <person name="Zafar N."/>
            <person name="Zhou L."/>
            <person name="Liu J."/>
            <person name="Yuan Q."/>
            <person name="Khouri H.M."/>
            <person name="Fedorova N.B."/>
            <person name="Tran B."/>
            <person name="Russell D."/>
            <person name="Berry K.J."/>
            <person name="Utterback T.R."/>
            <person name="Van Aken S.E."/>
            <person name="Feldblyum T.V."/>
            <person name="D'Ascenzo M."/>
            <person name="Deng W.-L."/>
            <person name="Ramos A.R."/>
            <person name="Alfano J.R."/>
            <person name="Cartinhour S."/>
            <person name="Chatterjee A.K."/>
            <person name="Delaney T.P."/>
            <person name="Lazarowitz S.G."/>
            <person name="Martin G.B."/>
            <person name="Schneider D.J."/>
            <person name="Tang X."/>
            <person name="Bender C.L."/>
            <person name="White O."/>
            <person name="Fraser C.M."/>
            <person name="Collmer A."/>
        </authorList>
    </citation>
    <scope>NUCLEOTIDE SEQUENCE [LARGE SCALE GENOMIC DNA]</scope>
    <source>
        <strain>ATCC BAA-871 / DC3000</strain>
    </source>
</reference>
<dbReference type="EC" id="1.3.3.11" evidence="1"/>
<dbReference type="EMBL" id="AE016853">
    <property type="protein sequence ID" value="AAO54054.1"/>
    <property type="molecule type" value="Genomic_DNA"/>
</dbReference>
<dbReference type="RefSeq" id="NP_790359.1">
    <property type="nucleotide sequence ID" value="NC_004578.1"/>
</dbReference>
<dbReference type="RefSeq" id="WP_005614033.1">
    <property type="nucleotide sequence ID" value="NC_004578.1"/>
</dbReference>
<dbReference type="SMR" id="Q88A82"/>
<dbReference type="STRING" id="223283.PSPTO_0511"/>
<dbReference type="GeneID" id="1182120"/>
<dbReference type="KEGG" id="pst:PSPTO_0511"/>
<dbReference type="PATRIC" id="fig|223283.9.peg.526"/>
<dbReference type="eggNOG" id="COG5424">
    <property type="taxonomic scope" value="Bacteria"/>
</dbReference>
<dbReference type="HOGENOM" id="CLU_080136_0_0_6"/>
<dbReference type="OrthoDB" id="9800756at2"/>
<dbReference type="PhylomeDB" id="Q88A82"/>
<dbReference type="UniPathway" id="UPA00539"/>
<dbReference type="Proteomes" id="UP000002515">
    <property type="component" value="Chromosome"/>
</dbReference>
<dbReference type="GO" id="GO:0033732">
    <property type="term" value="F:pyrroloquinoline-quinone synthase activity"/>
    <property type="evidence" value="ECO:0007669"/>
    <property type="project" value="UniProtKB-EC"/>
</dbReference>
<dbReference type="GO" id="GO:0018189">
    <property type="term" value="P:pyrroloquinoline quinone biosynthetic process"/>
    <property type="evidence" value="ECO:0007669"/>
    <property type="project" value="UniProtKB-UniRule"/>
</dbReference>
<dbReference type="GO" id="GO:0006790">
    <property type="term" value="P:sulfur compound metabolic process"/>
    <property type="evidence" value="ECO:0007669"/>
    <property type="project" value="UniProtKB-ARBA"/>
</dbReference>
<dbReference type="CDD" id="cd19370">
    <property type="entry name" value="TenA_PqqC"/>
    <property type="match status" value="1"/>
</dbReference>
<dbReference type="Gene3D" id="1.20.910.10">
    <property type="entry name" value="Heme oxygenase-like"/>
    <property type="match status" value="1"/>
</dbReference>
<dbReference type="HAMAP" id="MF_00654">
    <property type="entry name" value="PQQ_syn_PqqC"/>
    <property type="match status" value="1"/>
</dbReference>
<dbReference type="InterPro" id="IPR016084">
    <property type="entry name" value="Haem_Oase-like_multi-hlx"/>
</dbReference>
<dbReference type="InterPro" id="IPR011845">
    <property type="entry name" value="PqqC"/>
</dbReference>
<dbReference type="InterPro" id="IPR039068">
    <property type="entry name" value="PqqC-like"/>
</dbReference>
<dbReference type="InterPro" id="IPR004305">
    <property type="entry name" value="Thiaminase-2/PQQC"/>
</dbReference>
<dbReference type="NCBIfam" id="TIGR02111">
    <property type="entry name" value="PQQ_syn_pqqC"/>
    <property type="match status" value="1"/>
</dbReference>
<dbReference type="PANTHER" id="PTHR40279:SF3">
    <property type="entry name" value="4-AMINOBENZOATE SYNTHASE"/>
    <property type="match status" value="1"/>
</dbReference>
<dbReference type="PANTHER" id="PTHR40279">
    <property type="entry name" value="PQQC-LIKE PROTEIN"/>
    <property type="match status" value="1"/>
</dbReference>
<dbReference type="Pfam" id="PF03070">
    <property type="entry name" value="TENA_THI-4"/>
    <property type="match status" value="1"/>
</dbReference>
<dbReference type="SUPFAM" id="SSF48613">
    <property type="entry name" value="Heme oxygenase-like"/>
    <property type="match status" value="1"/>
</dbReference>
<accession>Q88A82</accession>
<name>PQQC_PSESM</name>
<protein>
    <recommendedName>
        <fullName evidence="1">Pyrroloquinoline-quinone synthase</fullName>
        <ecNumber evidence="1">1.3.3.11</ecNumber>
    </recommendedName>
    <alternativeName>
        <fullName evidence="1">Coenzyme PQQ synthesis protein C</fullName>
    </alternativeName>
    <alternativeName>
        <fullName evidence="1">Pyrroloquinoline quinone biosynthesis protein C</fullName>
    </alternativeName>
</protein>
<sequence>MSEATALSPAEFEQALRAKGAYYHIYHPFHVAMYEGRATREQIQGWVANRFYYQVNIPLKDAAILANCPDREIRREWIQRLLDHDGAPGEDGGIEAWLRLGEAVGLDPDQLRSQELVLPGVRFAVDAYVNFARRANWQEAASSSLTELFAPQIHQSRLDSWPQHYPWIDPTGYEYFRTRLGQARRDVEHGLAITLQHYTTYEGQQRMLEILQFKLDILWSMLDAMSMAYELNRPPYHSVTDQKVWHKGITP</sequence>